<gene>
    <name type="primary">CHRM1</name>
</gene>
<name>ACM1_MACMU</name>
<evidence type="ECO:0000250" key="1">
    <source>
        <dbReference type="UniProtKB" id="P11229"/>
    </source>
</evidence>
<evidence type="ECO:0000250" key="2">
    <source>
        <dbReference type="UniProtKB" id="P12657"/>
    </source>
</evidence>
<evidence type="ECO:0000255" key="3"/>
<evidence type="ECO:0000255" key="4">
    <source>
        <dbReference type="PROSITE-ProRule" id="PRU00498"/>
    </source>
</evidence>
<evidence type="ECO:0000255" key="5">
    <source>
        <dbReference type="PROSITE-ProRule" id="PRU00521"/>
    </source>
</evidence>
<evidence type="ECO:0000256" key="6">
    <source>
        <dbReference type="SAM" id="MobiDB-lite"/>
    </source>
</evidence>
<protein>
    <recommendedName>
        <fullName>Muscarinic acetylcholine receptor M1</fullName>
    </recommendedName>
</protein>
<accession>P56489</accession>
<dbReference type="EMBL" id="AF026262">
    <property type="protein sequence ID" value="AAB95157.1"/>
    <property type="molecule type" value="mRNA"/>
</dbReference>
<dbReference type="RefSeq" id="NP_001028117.1">
    <property type="nucleotide sequence ID" value="NM_001032945.1"/>
</dbReference>
<dbReference type="SMR" id="P56489"/>
<dbReference type="FunCoup" id="P56489">
    <property type="interactions" value="1054"/>
</dbReference>
<dbReference type="STRING" id="9544.ENSMMUP00000022746"/>
<dbReference type="ChEMBL" id="CHEMBL1795124"/>
<dbReference type="GlyCosmos" id="P56489">
    <property type="glycosylation" value="2 sites, No reported glycans"/>
</dbReference>
<dbReference type="PaxDb" id="9544-ENSMMUP00000022746"/>
<dbReference type="GeneID" id="574362"/>
<dbReference type="KEGG" id="mcc:574362"/>
<dbReference type="CTD" id="1128"/>
<dbReference type="eggNOG" id="KOG4220">
    <property type="taxonomic scope" value="Eukaryota"/>
</dbReference>
<dbReference type="InParanoid" id="P56489"/>
<dbReference type="OrthoDB" id="10071887at2759"/>
<dbReference type="PRO" id="PR:P56489"/>
<dbReference type="Proteomes" id="UP000006718">
    <property type="component" value="Unassembled WGS sequence"/>
</dbReference>
<dbReference type="GO" id="GO:0098982">
    <property type="term" value="C:GABA-ergic synapse"/>
    <property type="evidence" value="ECO:0000314"/>
    <property type="project" value="SynGO"/>
</dbReference>
<dbReference type="GO" id="GO:0098978">
    <property type="term" value="C:glutamatergic synapse"/>
    <property type="evidence" value="ECO:0000314"/>
    <property type="project" value="SynGO"/>
</dbReference>
<dbReference type="GO" id="GO:0005886">
    <property type="term" value="C:plasma membrane"/>
    <property type="evidence" value="ECO:0000318"/>
    <property type="project" value="GO_Central"/>
</dbReference>
<dbReference type="GO" id="GO:0045211">
    <property type="term" value="C:postsynaptic membrane"/>
    <property type="evidence" value="ECO:0000314"/>
    <property type="project" value="SynGO"/>
</dbReference>
<dbReference type="GO" id="GO:0016907">
    <property type="term" value="F:G protein-coupled acetylcholine receptor activity"/>
    <property type="evidence" value="ECO:0007669"/>
    <property type="project" value="InterPro"/>
</dbReference>
<dbReference type="GO" id="GO:0004930">
    <property type="term" value="F:G protein-coupled receptor activity"/>
    <property type="evidence" value="ECO:0000318"/>
    <property type="project" value="GO_Central"/>
</dbReference>
<dbReference type="GO" id="GO:0071880">
    <property type="term" value="P:adenylate cyclase-activating adrenergic receptor signaling pathway"/>
    <property type="evidence" value="ECO:0000318"/>
    <property type="project" value="GO_Central"/>
</dbReference>
<dbReference type="GO" id="GO:0050890">
    <property type="term" value="P:cognition"/>
    <property type="evidence" value="ECO:0007669"/>
    <property type="project" value="InterPro"/>
</dbReference>
<dbReference type="GO" id="GO:0043410">
    <property type="term" value="P:positive regulation of MAPK cascade"/>
    <property type="evidence" value="ECO:0000318"/>
    <property type="project" value="GO_Central"/>
</dbReference>
<dbReference type="GO" id="GO:0040012">
    <property type="term" value="P:regulation of locomotion"/>
    <property type="evidence" value="ECO:0007669"/>
    <property type="project" value="InterPro"/>
</dbReference>
<dbReference type="GO" id="GO:0046541">
    <property type="term" value="P:saliva secretion"/>
    <property type="evidence" value="ECO:0007669"/>
    <property type="project" value="InterPro"/>
</dbReference>
<dbReference type="CDD" id="cd17790">
    <property type="entry name" value="7tmA_mAChR_M1"/>
    <property type="match status" value="1"/>
</dbReference>
<dbReference type="FunFam" id="1.20.1070.10:FF:000103">
    <property type="entry name" value="Muscarinic acetylcholine receptor"/>
    <property type="match status" value="1"/>
</dbReference>
<dbReference type="FunFam" id="1.20.1070.10:FF:000162">
    <property type="entry name" value="Muscarinic acetylcholine receptor"/>
    <property type="match status" value="1"/>
</dbReference>
<dbReference type="Gene3D" id="1.20.1070.10">
    <property type="entry name" value="Rhodopsin 7-helix transmembrane proteins"/>
    <property type="match status" value="1"/>
</dbReference>
<dbReference type="InterPro" id="IPR000276">
    <property type="entry name" value="GPCR_Rhodpsn"/>
</dbReference>
<dbReference type="InterPro" id="IPR017452">
    <property type="entry name" value="GPCR_Rhodpsn_7TM"/>
</dbReference>
<dbReference type="InterPro" id="IPR002228">
    <property type="entry name" value="Musac_Ach_M1_rcpt"/>
</dbReference>
<dbReference type="InterPro" id="IPR000995">
    <property type="entry name" value="Musac_Ach_rcpt"/>
</dbReference>
<dbReference type="PANTHER" id="PTHR24247">
    <property type="entry name" value="5-HYDROXYTRYPTAMINE RECEPTOR"/>
    <property type="match status" value="1"/>
</dbReference>
<dbReference type="PANTHER" id="PTHR24247:SF182">
    <property type="entry name" value="MUSCARINIC ACETYLCHOLINE RECEPTOR M1"/>
    <property type="match status" value="1"/>
</dbReference>
<dbReference type="Pfam" id="PF00001">
    <property type="entry name" value="7tm_1"/>
    <property type="match status" value="1"/>
</dbReference>
<dbReference type="PRINTS" id="PR00237">
    <property type="entry name" value="GPCRRHODOPSN"/>
</dbReference>
<dbReference type="PRINTS" id="PR00243">
    <property type="entry name" value="MUSCARINICR"/>
</dbReference>
<dbReference type="PRINTS" id="PR00538">
    <property type="entry name" value="MUSCRINICM1R"/>
</dbReference>
<dbReference type="SUPFAM" id="SSF81321">
    <property type="entry name" value="Family A G protein-coupled receptor-like"/>
    <property type="match status" value="1"/>
</dbReference>
<dbReference type="PROSITE" id="PS00237">
    <property type="entry name" value="G_PROTEIN_RECEP_F1_1"/>
    <property type="match status" value="1"/>
</dbReference>
<dbReference type="PROSITE" id="PS50262">
    <property type="entry name" value="G_PROTEIN_RECEP_F1_2"/>
    <property type="match status" value="1"/>
</dbReference>
<reference key="1">
    <citation type="submission" date="1997-09" db="EMBL/GenBank/DDBJ databases">
        <authorList>
            <person name="Rae J.L."/>
            <person name="Shepard A.R."/>
        </authorList>
    </citation>
    <scope>NUCLEOTIDE SEQUENCE [MRNA]</scope>
    <source>
        <tissue>Lens epithelium</tissue>
    </source>
</reference>
<organism>
    <name type="scientific">Macaca mulatta</name>
    <name type="common">Rhesus macaque</name>
    <dbReference type="NCBI Taxonomy" id="9544"/>
    <lineage>
        <taxon>Eukaryota</taxon>
        <taxon>Metazoa</taxon>
        <taxon>Chordata</taxon>
        <taxon>Craniata</taxon>
        <taxon>Vertebrata</taxon>
        <taxon>Euteleostomi</taxon>
        <taxon>Mammalia</taxon>
        <taxon>Eutheria</taxon>
        <taxon>Euarchontoglires</taxon>
        <taxon>Primates</taxon>
        <taxon>Haplorrhini</taxon>
        <taxon>Catarrhini</taxon>
        <taxon>Cercopithecidae</taxon>
        <taxon>Cercopithecinae</taxon>
        <taxon>Macaca</taxon>
    </lineage>
</organism>
<proteinExistence type="evidence at transcript level"/>
<sequence>MNTSAPPAVSPNITVLAPGKGPWQVAFIGITTGLLSLATVTGNLLVLISFKVNTELKTVNNYFLLSLACADLIIGTFSMNLYTTYLLMGHWALGTLACDLWLALDYVASNASVMNLLLISFDRYFSVTRPLSYRAKRTPRRAALMIGLAWLVSFVLWAPAILFWQYLVGERTVLAGQCYIQFLSQPIITFGTAMAAFYLPVTVMCTLYWRIYRETENRARELAALQGSETPGKGGGSSSSSERSQPGAEGSPETPPGRCCRCCRPPRLLQAYSWKEDEEEDEGSMESLTSSEGEEPGSEVVIKMPMVDPEAQAPTKQPPRSSPNTVKRPTKKGRDRAGKGQKPRGKEQLAKRKTFSLVKEKKAARTLSAILLAFILTWTPYNIMVLVSTFCKDCVPETLWELGYWLCYVNSTINPMCYALCNKAFRDTFRLLLLCRWDKRRWRKIPKRPGSVHRTPSRQC</sequence>
<feature type="chain" id="PRO_0000069016" description="Muscarinic acetylcholine receptor M1">
    <location>
        <begin position="1"/>
        <end position="460"/>
    </location>
</feature>
<feature type="topological domain" description="Extracellular" evidence="1">
    <location>
        <begin position="1"/>
        <end position="22"/>
    </location>
</feature>
<feature type="transmembrane region" description="Helical; Name=1" evidence="1">
    <location>
        <begin position="23"/>
        <end position="48"/>
    </location>
</feature>
<feature type="topological domain" description="Cytoplasmic" evidence="1">
    <location>
        <begin position="49"/>
        <end position="62"/>
    </location>
</feature>
<feature type="transmembrane region" description="Helical; Name=2" evidence="1">
    <location>
        <begin position="63"/>
        <end position="84"/>
    </location>
</feature>
<feature type="topological domain" description="Extracellular" evidence="1">
    <location>
        <begin position="85"/>
        <end position="95"/>
    </location>
</feature>
<feature type="transmembrane region" description="Helical; Name=3" evidence="1">
    <location>
        <begin position="96"/>
        <end position="121"/>
    </location>
</feature>
<feature type="topological domain" description="Cytoplasmic" evidence="1">
    <location>
        <begin position="122"/>
        <end position="142"/>
    </location>
</feature>
<feature type="transmembrane region" description="Helical; Name=4" evidence="1">
    <location>
        <begin position="143"/>
        <end position="164"/>
    </location>
</feature>
<feature type="topological domain" description="Extracellular" evidence="1">
    <location>
        <begin position="165"/>
        <end position="185"/>
    </location>
</feature>
<feature type="transmembrane region" description="Helical; Name=5" evidence="1">
    <location>
        <begin position="186"/>
        <end position="209"/>
    </location>
</feature>
<feature type="topological domain" description="Cytoplasmic" evidence="1">
    <location>
        <begin position="210"/>
        <end position="366"/>
    </location>
</feature>
<feature type="transmembrane region" description="Helical; Name=6" evidence="1">
    <location>
        <begin position="367"/>
        <end position="390"/>
    </location>
</feature>
<feature type="topological domain" description="Extracellular" evidence="1">
    <location>
        <begin position="391"/>
        <end position="401"/>
    </location>
</feature>
<feature type="transmembrane region" description="Helical; Name=7" evidence="1">
    <location>
        <begin position="402"/>
        <end position="420"/>
    </location>
</feature>
<feature type="topological domain" description="Cytoplasmic" evidence="1">
    <location>
        <begin position="421"/>
        <end position="460"/>
    </location>
</feature>
<feature type="region of interest" description="Disordered" evidence="6">
    <location>
        <begin position="225"/>
        <end position="259"/>
    </location>
</feature>
<feature type="region of interest" description="Disordered" evidence="6">
    <location>
        <begin position="273"/>
        <end position="297"/>
    </location>
</feature>
<feature type="region of interest" description="Disordered" evidence="6">
    <location>
        <begin position="310"/>
        <end position="351"/>
    </location>
</feature>
<feature type="compositionally biased region" description="Low complexity" evidence="6">
    <location>
        <begin position="238"/>
        <end position="247"/>
    </location>
</feature>
<feature type="compositionally biased region" description="Basic residues" evidence="6">
    <location>
        <begin position="328"/>
        <end position="343"/>
    </location>
</feature>
<feature type="modified residue" description="Phosphothreonine" evidence="2">
    <location>
        <position position="230"/>
    </location>
</feature>
<feature type="modified residue" description="Phosphothreonine" evidence="3">
    <location>
        <position position="428"/>
    </location>
</feature>
<feature type="modified residue" description="Phosphoserine" evidence="3">
    <location>
        <position position="451"/>
    </location>
</feature>
<feature type="modified residue" description="Phosphothreonine" evidence="3">
    <location>
        <position position="455"/>
    </location>
</feature>
<feature type="modified residue" description="Phosphoserine" evidence="3">
    <location>
        <position position="457"/>
    </location>
</feature>
<feature type="glycosylation site" description="N-linked (GlcNAc...) asparagine" evidence="4">
    <location>
        <position position="2"/>
    </location>
</feature>
<feature type="glycosylation site" description="N-linked (GlcNAc...) asparagine" evidence="4">
    <location>
        <position position="12"/>
    </location>
</feature>
<feature type="disulfide bond" evidence="5">
    <location>
        <begin position="98"/>
        <end position="178"/>
    </location>
</feature>
<comment type="function">
    <text>The muscarinic acetylcholine receptor mediates various cellular responses, including inhibition of adenylate cyclase, breakdown of phosphoinositides and modulation of potassium channels through the action of G proteins. Primary transducing effect is Pi turnover.</text>
</comment>
<comment type="subunit">
    <text evidence="1">Interacts with GPRASP2 (By similarity). Interacts with TMEM147 (By similarity).</text>
</comment>
<comment type="subcellular location">
    <subcellularLocation>
        <location>Cell membrane</location>
        <topology>Multi-pass membrane protein</topology>
    </subcellularLocation>
    <subcellularLocation>
        <location>Postsynaptic cell membrane</location>
        <topology>Multi-pass membrane protein</topology>
    </subcellularLocation>
</comment>
<comment type="similarity">
    <text evidence="5">Belongs to the G-protein coupled receptor 1 family. Muscarinic acetylcholine receptor subfamily. CHRM1 sub-subfamily.</text>
</comment>
<keyword id="KW-1003">Cell membrane</keyword>
<keyword id="KW-1015">Disulfide bond</keyword>
<keyword id="KW-0297">G-protein coupled receptor</keyword>
<keyword id="KW-0325">Glycoprotein</keyword>
<keyword id="KW-0472">Membrane</keyword>
<keyword id="KW-0597">Phosphoprotein</keyword>
<keyword id="KW-0628">Postsynaptic cell membrane</keyword>
<keyword id="KW-0675">Receptor</keyword>
<keyword id="KW-1185">Reference proteome</keyword>
<keyword id="KW-0770">Synapse</keyword>
<keyword id="KW-0807">Transducer</keyword>
<keyword id="KW-0812">Transmembrane</keyword>
<keyword id="KW-1133">Transmembrane helix</keyword>